<name>NCB5R_YEAS7</name>
<gene>
    <name type="primary">CBR1</name>
    <name type="ORF">SCY_2742</name>
</gene>
<feature type="chain" id="PRO_0000330167" description="NADH-cytochrome b5 reductase 1">
    <location>
        <begin position="1"/>
        <end position="284"/>
    </location>
</feature>
<feature type="transmembrane region" description="Helical" evidence="3">
    <location>
        <begin position="7"/>
        <end position="27"/>
    </location>
</feature>
<feature type="domain" description="FAD-binding FR-type" evidence="4">
    <location>
        <begin position="38"/>
        <end position="142"/>
    </location>
</feature>
<feature type="binding site" evidence="1">
    <location>
        <begin position="148"/>
        <end position="180"/>
    </location>
    <ligand>
        <name>FAD</name>
        <dbReference type="ChEBI" id="CHEBI:57692"/>
    </ligand>
</feature>
<keyword id="KW-0274">FAD</keyword>
<keyword id="KW-0285">Flavoprotein</keyword>
<keyword id="KW-0472">Membrane</keyword>
<keyword id="KW-0496">Mitochondrion</keyword>
<keyword id="KW-1000">Mitochondrion outer membrane</keyword>
<keyword id="KW-0520">NAD</keyword>
<keyword id="KW-0560">Oxidoreductase</keyword>
<keyword id="KW-0808">Transferase</keyword>
<keyword id="KW-0812">Transmembrane</keyword>
<keyword id="KW-1133">Transmembrane helix</keyword>
<comment type="function">
    <text evidence="2">NADH-dependent reductase for KTI11/DPH3 and cytochrome b5. Required for the first step of diphthamide biosynthesis, a post-translational modification of histidine which occurs in elongation factor 2. DPH1 and DPH2 transfer a 3-amino-3-carboxypropyl (ACP) group from S-adenosyl-L-methionine (SAM) to a histidine residue, the reaction is assisted by a reduction system comprising KTI11/DPH3 and a NADH-dependent reductase, predominantly CBR1. By reducing KTI11/DPH3, also involved in the formation of the tRNA wobble base modification mcm5s 2U (5-methoxycarbonylmethyl-2-thiouridine), mediated by the elongator complex. The cytochrome b5/NADH cytochrome b5 reductase electron transfer system supports the catalytic activity of several sterol biosynthetic enzymes. Plays a role in bud morphology.</text>
</comment>
<comment type="catalytic activity">
    <reaction evidence="2">
        <text>2 Fe(III)-[cytochrome b5] + NADH = 2 Fe(II)-[cytochrome b5] + NAD(+) + H(+)</text>
        <dbReference type="Rhea" id="RHEA:46680"/>
        <dbReference type="Rhea" id="RHEA-COMP:10438"/>
        <dbReference type="Rhea" id="RHEA-COMP:10439"/>
        <dbReference type="ChEBI" id="CHEBI:15378"/>
        <dbReference type="ChEBI" id="CHEBI:29033"/>
        <dbReference type="ChEBI" id="CHEBI:29034"/>
        <dbReference type="ChEBI" id="CHEBI:57540"/>
        <dbReference type="ChEBI" id="CHEBI:57945"/>
        <dbReference type="EC" id="1.6.2.2"/>
    </reaction>
</comment>
<comment type="catalytic activity">
    <reaction evidence="2">
        <text>2 Fe(3+)-[Dph3] + NADH = 2 Fe(2+)-[Dph3] + NAD(+) + H(+)</text>
        <dbReference type="Rhea" id="RHEA:71231"/>
        <dbReference type="Rhea" id="RHEA-COMP:18002"/>
        <dbReference type="Rhea" id="RHEA-COMP:18003"/>
        <dbReference type="ChEBI" id="CHEBI:15378"/>
        <dbReference type="ChEBI" id="CHEBI:29033"/>
        <dbReference type="ChEBI" id="CHEBI:29034"/>
        <dbReference type="ChEBI" id="CHEBI:57540"/>
        <dbReference type="ChEBI" id="CHEBI:57945"/>
        <dbReference type="ChEBI" id="CHEBI:83228"/>
    </reaction>
    <physiologicalReaction direction="left-to-right" evidence="2">
        <dbReference type="Rhea" id="RHEA:71232"/>
    </physiologicalReaction>
</comment>
<comment type="cofactor">
    <cofactor evidence="3">
        <name>FAD</name>
        <dbReference type="ChEBI" id="CHEBI:57692"/>
    </cofactor>
</comment>
<comment type="activity regulation">
    <text evidence="2">Competitively inhibited by NAD(+). Inhibited by mercurials such as p-chloromercuribenzoate (PCMB) and HgCl(2). Enzymatic activity increases under anaerobic conditions (By similarity).</text>
</comment>
<comment type="pathway">
    <text evidence="2">Protein modification; peptidyl-diphthamide biosynthesis.</text>
</comment>
<comment type="subunit">
    <text evidence="2">Monomer. Component of the 2-(3-amino-3-carboxypropyl)histidine synthase complex composed of DPH1, DPH2, KTI11/DPH3 and a NADH-dependent reductase, predominantly CBR1 (By similarity). Interacts with KTI11/DPH3 (By similarity). Interacts with STE20 (By similarity).</text>
</comment>
<comment type="subcellular location">
    <subcellularLocation>
        <location evidence="2">Mitochondrion outer membrane</location>
        <topology evidence="3">Single-pass membrane protein</topology>
    </subcellularLocation>
</comment>
<comment type="induction">
    <text evidence="1">Protein levels are highest during exponential growth phase and lowest in stationary phase.</text>
</comment>
<comment type="similarity">
    <text evidence="5">Belongs to the flavoprotein pyridine nucleotide cytochrome reductase family.</text>
</comment>
<comment type="sequence caution" evidence="5">
    <conflict type="erroneous initiation">
        <sequence resource="EMBL-CDS" id="EDN61451"/>
    </conflict>
</comment>
<accession>A6ZVM6</accession>
<organism>
    <name type="scientific">Saccharomyces cerevisiae (strain YJM789)</name>
    <name type="common">Baker's yeast</name>
    <dbReference type="NCBI Taxonomy" id="307796"/>
    <lineage>
        <taxon>Eukaryota</taxon>
        <taxon>Fungi</taxon>
        <taxon>Dikarya</taxon>
        <taxon>Ascomycota</taxon>
        <taxon>Saccharomycotina</taxon>
        <taxon>Saccharomycetes</taxon>
        <taxon>Saccharomycetales</taxon>
        <taxon>Saccharomycetaceae</taxon>
        <taxon>Saccharomyces</taxon>
    </lineage>
</organism>
<protein>
    <recommendedName>
        <fullName>NADH-cytochrome b5 reductase 1</fullName>
        <ecNumber evidence="2">1.6.2.2</ecNumber>
    </recommendedName>
    <alternativeName>
        <fullName>Microsomal cytochrome b reductase</fullName>
    </alternativeName>
    <alternativeName>
        <fullName>P35</fullName>
    </alternativeName>
</protein>
<dbReference type="EC" id="1.6.2.2" evidence="2"/>
<dbReference type="EMBL" id="AAFW02000124">
    <property type="protein sequence ID" value="EDN61451.1"/>
    <property type="status" value="ALT_INIT"/>
    <property type="molecule type" value="Genomic_DNA"/>
</dbReference>
<dbReference type="SMR" id="A6ZVM6"/>
<dbReference type="TopDownProteomics" id="A6ZVM6"/>
<dbReference type="HOGENOM" id="CLU_003827_9_0_1"/>
<dbReference type="OrthoDB" id="20250at4893"/>
<dbReference type="UniPathway" id="UPA00559"/>
<dbReference type="Proteomes" id="UP000007060">
    <property type="component" value="Unassembled WGS sequence"/>
</dbReference>
<dbReference type="GO" id="GO:0005783">
    <property type="term" value="C:endoplasmic reticulum"/>
    <property type="evidence" value="ECO:0007669"/>
    <property type="project" value="TreeGrafter"/>
</dbReference>
<dbReference type="GO" id="GO:0005741">
    <property type="term" value="C:mitochondrial outer membrane"/>
    <property type="evidence" value="ECO:0007669"/>
    <property type="project" value="UniProtKB-SubCell"/>
</dbReference>
<dbReference type="GO" id="GO:0005886">
    <property type="term" value="C:plasma membrane"/>
    <property type="evidence" value="ECO:0007669"/>
    <property type="project" value="TreeGrafter"/>
</dbReference>
<dbReference type="GO" id="GO:0004128">
    <property type="term" value="F:cytochrome-b5 reductase activity, acting on NAD(P)H"/>
    <property type="evidence" value="ECO:0000250"/>
    <property type="project" value="UniProtKB"/>
</dbReference>
<dbReference type="GO" id="GO:0003954">
    <property type="term" value="F:NADH dehydrogenase activity"/>
    <property type="evidence" value="ECO:0000250"/>
    <property type="project" value="UniProtKB"/>
</dbReference>
<dbReference type="GO" id="GO:0016740">
    <property type="term" value="F:transferase activity"/>
    <property type="evidence" value="ECO:0007669"/>
    <property type="project" value="UniProtKB-KW"/>
</dbReference>
<dbReference type="GO" id="GO:0017183">
    <property type="term" value="P:protein histidyl modification to diphthamide"/>
    <property type="evidence" value="ECO:0000250"/>
    <property type="project" value="UniProtKB"/>
</dbReference>
<dbReference type="GO" id="GO:0002926">
    <property type="term" value="P:tRNA wobble base 5-methoxycarbonylmethyl-2-thiouridinylation"/>
    <property type="evidence" value="ECO:0000250"/>
    <property type="project" value="UniProtKB"/>
</dbReference>
<dbReference type="CDD" id="cd06183">
    <property type="entry name" value="cyt_b5_reduct_like"/>
    <property type="match status" value="1"/>
</dbReference>
<dbReference type="FunFam" id="2.40.30.10:FF:000032">
    <property type="entry name" value="NADH-cytochrome b5 reductase"/>
    <property type="match status" value="1"/>
</dbReference>
<dbReference type="FunFam" id="3.40.50.80:FF:000009">
    <property type="entry name" value="NADH-cytochrome b5 reductase"/>
    <property type="match status" value="1"/>
</dbReference>
<dbReference type="Gene3D" id="3.40.50.80">
    <property type="entry name" value="Nucleotide-binding domain of ferredoxin-NADP reductase (FNR) module"/>
    <property type="match status" value="1"/>
</dbReference>
<dbReference type="Gene3D" id="2.40.30.10">
    <property type="entry name" value="Translation factors"/>
    <property type="match status" value="1"/>
</dbReference>
<dbReference type="InterPro" id="IPR001834">
    <property type="entry name" value="CBR-like"/>
</dbReference>
<dbReference type="InterPro" id="IPR008333">
    <property type="entry name" value="Cbr1-like_FAD-bd_dom"/>
</dbReference>
<dbReference type="InterPro" id="IPR017927">
    <property type="entry name" value="FAD-bd_FR_type"/>
</dbReference>
<dbReference type="InterPro" id="IPR001709">
    <property type="entry name" value="Flavoprot_Pyr_Nucl_cyt_Rdtase"/>
</dbReference>
<dbReference type="InterPro" id="IPR039261">
    <property type="entry name" value="FNR_nucleotide-bd"/>
</dbReference>
<dbReference type="InterPro" id="IPR001433">
    <property type="entry name" value="OxRdtase_FAD/NAD-bd"/>
</dbReference>
<dbReference type="InterPro" id="IPR017938">
    <property type="entry name" value="Riboflavin_synthase-like_b-brl"/>
</dbReference>
<dbReference type="PANTHER" id="PTHR19370">
    <property type="entry name" value="NADH-CYTOCHROME B5 REDUCTASE"/>
    <property type="match status" value="1"/>
</dbReference>
<dbReference type="PANTHER" id="PTHR19370:SF184">
    <property type="entry name" value="NADH-CYTOCHROME B5 REDUCTASE-LIKE"/>
    <property type="match status" value="1"/>
</dbReference>
<dbReference type="Pfam" id="PF00970">
    <property type="entry name" value="FAD_binding_6"/>
    <property type="match status" value="1"/>
</dbReference>
<dbReference type="Pfam" id="PF00175">
    <property type="entry name" value="NAD_binding_1"/>
    <property type="match status" value="1"/>
</dbReference>
<dbReference type="PRINTS" id="PR00406">
    <property type="entry name" value="CYTB5RDTASE"/>
</dbReference>
<dbReference type="PRINTS" id="PR00371">
    <property type="entry name" value="FPNCR"/>
</dbReference>
<dbReference type="SUPFAM" id="SSF52343">
    <property type="entry name" value="Ferredoxin reductase-like, C-terminal NADP-linked domain"/>
    <property type="match status" value="1"/>
</dbReference>
<dbReference type="SUPFAM" id="SSF63380">
    <property type="entry name" value="Riboflavin synthase domain-like"/>
    <property type="match status" value="1"/>
</dbReference>
<dbReference type="PROSITE" id="PS51384">
    <property type="entry name" value="FAD_FR"/>
    <property type="match status" value="1"/>
</dbReference>
<sequence>MAIDAQKLVVVIVIVVVPLLFKFIIGPKTKPVLDPKRNDFQSFPLVEKTILTHNTSMYKFGLPHADDVLGLPIGQHIVIKANINGKDITRSYTPTSLDGDTKGNFELLVKSYPTGNVSKMIGELKIGDSIQIKGPRGNYHYERNCRSHLGMIAGGTGIAPMYQIMKAIAMDSHDTTKVSLVFGNVHEEDILLKKELEALVAMKPSQFKIVYYLDSPDREDWAGGVGYITKDVIKEHLPAATVDNVQILICGPPAMVASVRRSTVDLGFRRSKPLSKMEDQVFVF</sequence>
<reference key="1">
    <citation type="journal article" date="2007" name="Proc. Natl. Acad. Sci. U.S.A.">
        <title>Genome sequencing and comparative analysis of Saccharomyces cerevisiae strain YJM789.</title>
        <authorList>
            <person name="Wei W."/>
            <person name="McCusker J.H."/>
            <person name="Hyman R.W."/>
            <person name="Jones T."/>
            <person name="Ning Y."/>
            <person name="Cao Z."/>
            <person name="Gu Z."/>
            <person name="Bruno D."/>
            <person name="Miranda M."/>
            <person name="Nguyen M."/>
            <person name="Wilhelmy J."/>
            <person name="Komp C."/>
            <person name="Tamse R."/>
            <person name="Wang X."/>
            <person name="Jia P."/>
            <person name="Luedi P."/>
            <person name="Oefner P.J."/>
            <person name="David L."/>
            <person name="Dietrich F.S."/>
            <person name="Li Y."/>
            <person name="Davis R.W."/>
            <person name="Steinmetz L.M."/>
        </authorList>
    </citation>
    <scope>NUCLEOTIDE SEQUENCE [LARGE SCALE GENOMIC DNA]</scope>
    <source>
        <strain>YJM789</strain>
    </source>
</reference>
<evidence type="ECO:0000250" key="1"/>
<evidence type="ECO:0000250" key="2">
    <source>
        <dbReference type="UniProtKB" id="P38626"/>
    </source>
</evidence>
<evidence type="ECO:0000255" key="3"/>
<evidence type="ECO:0000255" key="4">
    <source>
        <dbReference type="PROSITE-ProRule" id="PRU00716"/>
    </source>
</evidence>
<evidence type="ECO:0000305" key="5"/>
<proteinExistence type="inferred from homology"/>